<name>PUR5_BACC2</name>
<organism>
    <name type="scientific">Bacillus cereus (strain G9842)</name>
    <dbReference type="NCBI Taxonomy" id="405531"/>
    <lineage>
        <taxon>Bacteria</taxon>
        <taxon>Bacillati</taxon>
        <taxon>Bacillota</taxon>
        <taxon>Bacilli</taxon>
        <taxon>Bacillales</taxon>
        <taxon>Bacillaceae</taxon>
        <taxon>Bacillus</taxon>
        <taxon>Bacillus cereus group</taxon>
    </lineage>
</organism>
<accession>B7IUV5</accession>
<dbReference type="EC" id="6.3.3.1" evidence="1"/>
<dbReference type="EMBL" id="CP001186">
    <property type="protein sequence ID" value="ACK97469.1"/>
    <property type="molecule type" value="Genomic_DNA"/>
</dbReference>
<dbReference type="RefSeq" id="WP_001262424.1">
    <property type="nucleotide sequence ID" value="NC_011772.1"/>
</dbReference>
<dbReference type="SMR" id="B7IUV5"/>
<dbReference type="KEGG" id="bcg:BCG9842_B4978"/>
<dbReference type="HOGENOM" id="CLU_047116_0_0_9"/>
<dbReference type="UniPathway" id="UPA00074">
    <property type="reaction ID" value="UER00129"/>
</dbReference>
<dbReference type="Proteomes" id="UP000006744">
    <property type="component" value="Chromosome"/>
</dbReference>
<dbReference type="GO" id="GO:0005829">
    <property type="term" value="C:cytosol"/>
    <property type="evidence" value="ECO:0007669"/>
    <property type="project" value="TreeGrafter"/>
</dbReference>
<dbReference type="GO" id="GO:0005524">
    <property type="term" value="F:ATP binding"/>
    <property type="evidence" value="ECO:0007669"/>
    <property type="project" value="UniProtKB-KW"/>
</dbReference>
<dbReference type="GO" id="GO:0004637">
    <property type="term" value="F:phosphoribosylamine-glycine ligase activity"/>
    <property type="evidence" value="ECO:0007669"/>
    <property type="project" value="TreeGrafter"/>
</dbReference>
<dbReference type="GO" id="GO:0004641">
    <property type="term" value="F:phosphoribosylformylglycinamidine cyclo-ligase activity"/>
    <property type="evidence" value="ECO:0007669"/>
    <property type="project" value="UniProtKB-UniRule"/>
</dbReference>
<dbReference type="GO" id="GO:0006189">
    <property type="term" value="P:'de novo' IMP biosynthetic process"/>
    <property type="evidence" value="ECO:0007669"/>
    <property type="project" value="UniProtKB-UniRule"/>
</dbReference>
<dbReference type="GO" id="GO:0046084">
    <property type="term" value="P:adenine biosynthetic process"/>
    <property type="evidence" value="ECO:0007669"/>
    <property type="project" value="TreeGrafter"/>
</dbReference>
<dbReference type="CDD" id="cd02196">
    <property type="entry name" value="PurM"/>
    <property type="match status" value="1"/>
</dbReference>
<dbReference type="FunFam" id="3.30.1330.10:FF:000001">
    <property type="entry name" value="Phosphoribosylformylglycinamidine cyclo-ligase"/>
    <property type="match status" value="1"/>
</dbReference>
<dbReference type="FunFam" id="3.90.650.10:FF:000001">
    <property type="entry name" value="Phosphoribosylformylglycinamidine cyclo-ligase"/>
    <property type="match status" value="1"/>
</dbReference>
<dbReference type="Gene3D" id="3.90.650.10">
    <property type="entry name" value="PurM-like C-terminal domain"/>
    <property type="match status" value="1"/>
</dbReference>
<dbReference type="Gene3D" id="3.30.1330.10">
    <property type="entry name" value="PurM-like, N-terminal domain"/>
    <property type="match status" value="1"/>
</dbReference>
<dbReference type="HAMAP" id="MF_00741">
    <property type="entry name" value="AIRS"/>
    <property type="match status" value="1"/>
</dbReference>
<dbReference type="InterPro" id="IPR010918">
    <property type="entry name" value="PurM-like_C_dom"/>
</dbReference>
<dbReference type="InterPro" id="IPR036676">
    <property type="entry name" value="PurM-like_C_sf"/>
</dbReference>
<dbReference type="InterPro" id="IPR016188">
    <property type="entry name" value="PurM-like_N"/>
</dbReference>
<dbReference type="InterPro" id="IPR036921">
    <property type="entry name" value="PurM-like_N_sf"/>
</dbReference>
<dbReference type="InterPro" id="IPR004733">
    <property type="entry name" value="PurM_cligase"/>
</dbReference>
<dbReference type="NCBIfam" id="TIGR00878">
    <property type="entry name" value="purM"/>
    <property type="match status" value="1"/>
</dbReference>
<dbReference type="PANTHER" id="PTHR10520:SF12">
    <property type="entry name" value="TRIFUNCTIONAL PURINE BIOSYNTHETIC PROTEIN ADENOSINE-3"/>
    <property type="match status" value="1"/>
</dbReference>
<dbReference type="PANTHER" id="PTHR10520">
    <property type="entry name" value="TRIFUNCTIONAL PURINE BIOSYNTHETIC PROTEIN ADENOSINE-3-RELATED"/>
    <property type="match status" value="1"/>
</dbReference>
<dbReference type="Pfam" id="PF00586">
    <property type="entry name" value="AIRS"/>
    <property type="match status" value="1"/>
</dbReference>
<dbReference type="Pfam" id="PF02769">
    <property type="entry name" value="AIRS_C"/>
    <property type="match status" value="1"/>
</dbReference>
<dbReference type="SUPFAM" id="SSF56042">
    <property type="entry name" value="PurM C-terminal domain-like"/>
    <property type="match status" value="1"/>
</dbReference>
<dbReference type="SUPFAM" id="SSF55326">
    <property type="entry name" value="PurM N-terminal domain-like"/>
    <property type="match status" value="1"/>
</dbReference>
<reference key="1">
    <citation type="submission" date="2008-10" db="EMBL/GenBank/DDBJ databases">
        <title>Genome sequence of Bacillus cereus G9842.</title>
        <authorList>
            <person name="Dodson R.J."/>
            <person name="Durkin A.S."/>
            <person name="Rosovitz M.J."/>
            <person name="Rasko D.A."/>
            <person name="Hoffmaster A."/>
            <person name="Ravel J."/>
            <person name="Sutton G."/>
        </authorList>
    </citation>
    <scope>NUCLEOTIDE SEQUENCE [LARGE SCALE GENOMIC DNA]</scope>
    <source>
        <strain>G9842</strain>
    </source>
</reference>
<feature type="chain" id="PRO_1000192995" description="Phosphoribosylformylglycinamidine cyclo-ligase">
    <location>
        <begin position="1"/>
        <end position="346"/>
    </location>
</feature>
<sequence>MANAYKQAGVDIEAGYEAVSRMKKHVQTTMRKEVLGGLGGFGGMFDLSKFALEEPVLVSGTDGVGTKLMLAFMADKHDTIGIDAVAMCVNDIVVQGAEPLFFLDYIACGKAEPSKIENIVKGISEGCRQAGCALIGGETAEMPGMYSTEEYDLAGFTVGIVDKKKIITGEKIEAGHVLIGLASSGIHSNGYSLVRKVLLEDGELSLERIYGRLELPLGEELLKPTKIYVKPILELLKKHEVYGMAHITGGGFIENIPRMLPEGIGAEIELGSWKIQPIFSLLQEVGNLEEKDMFNIFNMGIGMVVAVKEEDAKDVVRLLEEQGETARIIGRTIQGAGVTFNGGTAL</sequence>
<keyword id="KW-0067">ATP-binding</keyword>
<keyword id="KW-0963">Cytoplasm</keyword>
<keyword id="KW-0436">Ligase</keyword>
<keyword id="KW-0547">Nucleotide-binding</keyword>
<keyword id="KW-0658">Purine biosynthesis</keyword>
<proteinExistence type="inferred from homology"/>
<comment type="catalytic activity">
    <reaction evidence="1">
        <text>2-formamido-N(1)-(5-O-phospho-beta-D-ribosyl)acetamidine + ATP = 5-amino-1-(5-phospho-beta-D-ribosyl)imidazole + ADP + phosphate + H(+)</text>
        <dbReference type="Rhea" id="RHEA:23032"/>
        <dbReference type="ChEBI" id="CHEBI:15378"/>
        <dbReference type="ChEBI" id="CHEBI:30616"/>
        <dbReference type="ChEBI" id="CHEBI:43474"/>
        <dbReference type="ChEBI" id="CHEBI:137981"/>
        <dbReference type="ChEBI" id="CHEBI:147287"/>
        <dbReference type="ChEBI" id="CHEBI:456216"/>
        <dbReference type="EC" id="6.3.3.1"/>
    </reaction>
</comment>
<comment type="pathway">
    <text evidence="1">Purine metabolism; IMP biosynthesis via de novo pathway; 5-amino-1-(5-phospho-D-ribosyl)imidazole from N(2)-formyl-N(1)-(5-phospho-D-ribosyl)glycinamide: step 2/2.</text>
</comment>
<comment type="subcellular location">
    <subcellularLocation>
        <location evidence="1">Cytoplasm</location>
    </subcellularLocation>
</comment>
<comment type="similarity">
    <text evidence="1">Belongs to the AIR synthase family.</text>
</comment>
<gene>
    <name evidence="1" type="primary">purM</name>
    <name type="ordered locus">BCG9842_B4978</name>
</gene>
<protein>
    <recommendedName>
        <fullName evidence="1">Phosphoribosylformylglycinamidine cyclo-ligase</fullName>
        <ecNumber evidence="1">6.3.3.1</ecNumber>
    </recommendedName>
    <alternativeName>
        <fullName evidence="1">AIR synthase</fullName>
    </alternativeName>
    <alternativeName>
        <fullName evidence="1">AIRS</fullName>
    </alternativeName>
    <alternativeName>
        <fullName evidence="1">Phosphoribosyl-aminoimidazole synthetase</fullName>
    </alternativeName>
</protein>
<evidence type="ECO:0000255" key="1">
    <source>
        <dbReference type="HAMAP-Rule" id="MF_00741"/>
    </source>
</evidence>